<feature type="chain" id="PRO_0000186569" description="PTS system glucitol/sorbitol-specific EIIA component">
    <location>
        <begin position="1"/>
        <end position="123"/>
    </location>
</feature>
<feature type="domain" description="PTS EIIA type-5" evidence="2">
    <location>
        <begin position="1"/>
        <end position="116"/>
    </location>
</feature>
<feature type="active site" description="Tele-phosphohistidine intermediate" evidence="3">
    <location>
        <position position="43"/>
    </location>
</feature>
<feature type="modified residue" description="Phosphohistidine; by HPr" evidence="2">
    <location>
        <position position="43"/>
    </location>
</feature>
<organism>
    <name type="scientific">Shigella flexneri</name>
    <dbReference type="NCBI Taxonomy" id="623"/>
    <lineage>
        <taxon>Bacteria</taxon>
        <taxon>Pseudomonadati</taxon>
        <taxon>Pseudomonadota</taxon>
        <taxon>Gammaproteobacteria</taxon>
        <taxon>Enterobacterales</taxon>
        <taxon>Enterobacteriaceae</taxon>
        <taxon>Shigella</taxon>
    </lineage>
</organism>
<sequence>MTVIYQTTITRIGASATDALSDQMLITFREGAPADLEEYCFIHCHGELKGALHPGLQFSLGQHRYPVTAVGSVAEDNLRELGHVTLRFDGLNEAEFPGTVHVAGPVPDDIAPGSVLKFESVKE</sequence>
<keyword id="KW-0963">Cytoplasm</keyword>
<keyword id="KW-0418">Kinase</keyword>
<keyword id="KW-0597">Phosphoprotein</keyword>
<keyword id="KW-0598">Phosphotransferase system</keyword>
<keyword id="KW-1185">Reference proteome</keyword>
<keyword id="KW-0762">Sugar transport</keyword>
<keyword id="KW-0808">Transferase</keyword>
<keyword id="KW-0813">Transport</keyword>
<reference key="1">
    <citation type="journal article" date="2002" name="Nucleic Acids Res.">
        <title>Genome sequence of Shigella flexneri 2a: insights into pathogenicity through comparison with genomes of Escherichia coli K12 and O157.</title>
        <authorList>
            <person name="Jin Q."/>
            <person name="Yuan Z."/>
            <person name="Xu J."/>
            <person name="Wang Y."/>
            <person name="Shen Y."/>
            <person name="Lu W."/>
            <person name="Wang J."/>
            <person name="Liu H."/>
            <person name="Yang J."/>
            <person name="Yang F."/>
            <person name="Zhang X."/>
            <person name="Zhang J."/>
            <person name="Yang G."/>
            <person name="Wu H."/>
            <person name="Qu D."/>
            <person name="Dong J."/>
            <person name="Sun L."/>
            <person name="Xue Y."/>
            <person name="Zhao A."/>
            <person name="Gao Y."/>
            <person name="Zhu J."/>
            <person name="Kan B."/>
            <person name="Ding K."/>
            <person name="Chen S."/>
            <person name="Cheng H."/>
            <person name="Yao Z."/>
            <person name="He B."/>
            <person name="Chen R."/>
            <person name="Ma D."/>
            <person name="Qiang B."/>
            <person name="Wen Y."/>
            <person name="Hou Y."/>
            <person name="Yu J."/>
        </authorList>
    </citation>
    <scope>NUCLEOTIDE SEQUENCE [LARGE SCALE GENOMIC DNA]</scope>
    <source>
        <strain>301 / Serotype 2a</strain>
    </source>
</reference>
<reference key="2">
    <citation type="journal article" date="2003" name="Infect. Immun.">
        <title>Complete genome sequence and comparative genomics of Shigella flexneri serotype 2a strain 2457T.</title>
        <authorList>
            <person name="Wei J."/>
            <person name="Goldberg M.B."/>
            <person name="Burland V."/>
            <person name="Venkatesan M.M."/>
            <person name="Deng W."/>
            <person name="Fournier G."/>
            <person name="Mayhew G.F."/>
            <person name="Plunkett G. III"/>
            <person name="Rose D.J."/>
            <person name="Darling A."/>
            <person name="Mau B."/>
            <person name="Perna N.T."/>
            <person name="Payne S.M."/>
            <person name="Runyen-Janecky L.J."/>
            <person name="Zhou S."/>
            <person name="Schwartz D.C."/>
            <person name="Blattner F.R."/>
        </authorList>
    </citation>
    <scope>NUCLEOTIDE SEQUENCE [LARGE SCALE GENOMIC DNA]</scope>
    <source>
        <strain>ATCC 700930 / 2457T / Serotype 2a</strain>
    </source>
</reference>
<proteinExistence type="inferred from homology"/>
<comment type="function">
    <text evidence="1">The phosphoenolpyruvate-dependent sugar phosphotransferase system (sugar PTS), a major carbohydrate active transport system, catalyzes the phosphorylation of incoming sugar substrates concomitantly with their translocation across the cell membrane. The enzyme II complex composed of SrlA, SrlB and SrlE is involved in glucitol/sorbitol transport.</text>
</comment>
<comment type="subcellular location">
    <subcellularLocation>
        <location evidence="1">Cytoplasm</location>
    </subcellularLocation>
</comment>
<comment type="domain">
    <text evidence="2">The EIIA domain is phosphorylated by phospho-HPr on a histidyl residue. Then, it transfers the phosphoryl group to the EIIB domain.</text>
</comment>
<name>PTHA_SHIFL</name>
<evidence type="ECO:0000250" key="1">
    <source>
        <dbReference type="UniProtKB" id="P05706"/>
    </source>
</evidence>
<evidence type="ECO:0000255" key="2">
    <source>
        <dbReference type="PROSITE-ProRule" id="PRU00420"/>
    </source>
</evidence>
<evidence type="ECO:0000305" key="3"/>
<accession>P59784</accession>
<dbReference type="EMBL" id="AE005674">
    <property type="protein sequence ID" value="AAN44218.1"/>
    <property type="molecule type" value="Genomic_DNA"/>
</dbReference>
<dbReference type="EMBL" id="AE014073">
    <property type="protein sequence ID" value="AAP18044.1"/>
    <property type="molecule type" value="Genomic_DNA"/>
</dbReference>
<dbReference type="RefSeq" id="NP_708511.1">
    <property type="nucleotide sequence ID" value="NC_004337.2"/>
</dbReference>
<dbReference type="RefSeq" id="WP_000216201.1">
    <property type="nucleotide sequence ID" value="NZ_WPGW01000014.1"/>
</dbReference>
<dbReference type="SMR" id="P59784"/>
<dbReference type="STRING" id="198214.SF2727"/>
<dbReference type="PaxDb" id="198214-SF2727"/>
<dbReference type="GeneID" id="1025719"/>
<dbReference type="GeneID" id="89517514"/>
<dbReference type="KEGG" id="sfl:SF2727"/>
<dbReference type="KEGG" id="sfx:S2918"/>
<dbReference type="PATRIC" id="fig|198214.7.peg.3248"/>
<dbReference type="HOGENOM" id="CLU_138435_2_1_6"/>
<dbReference type="Proteomes" id="UP000001006">
    <property type="component" value="Chromosome"/>
</dbReference>
<dbReference type="Proteomes" id="UP000002673">
    <property type="component" value="Chromosome"/>
</dbReference>
<dbReference type="GO" id="GO:0005737">
    <property type="term" value="C:cytoplasm"/>
    <property type="evidence" value="ECO:0007669"/>
    <property type="project" value="UniProtKB-SubCell"/>
</dbReference>
<dbReference type="GO" id="GO:0016301">
    <property type="term" value="F:kinase activity"/>
    <property type="evidence" value="ECO:0007669"/>
    <property type="project" value="UniProtKB-KW"/>
</dbReference>
<dbReference type="GO" id="GO:0008982">
    <property type="term" value="F:protein-N(PI)-phosphohistidine-sugar phosphotransferase activity"/>
    <property type="evidence" value="ECO:0007669"/>
    <property type="project" value="InterPro"/>
</dbReference>
<dbReference type="GO" id="GO:0009401">
    <property type="term" value="P:phosphoenolpyruvate-dependent sugar phosphotransferase system"/>
    <property type="evidence" value="ECO:0000250"/>
    <property type="project" value="UniProtKB"/>
</dbReference>
<dbReference type="FunFam" id="2.40.33.40:FF:000001">
    <property type="entry name" value="PTS system, glucitol/sorbitol-specific, IIA component"/>
    <property type="match status" value="1"/>
</dbReference>
<dbReference type="Gene3D" id="2.40.33.40">
    <property type="entry name" value="Phosphotransferase system, glucitol/sorbitol-specific IIA component"/>
    <property type="match status" value="1"/>
</dbReference>
<dbReference type="InterPro" id="IPR004716">
    <property type="entry name" value="PTS_IIA_glucitol/sorbitol-sp"/>
</dbReference>
<dbReference type="InterPro" id="IPR036665">
    <property type="entry name" value="PTS_IIA_glucitol/sorbitol_sf"/>
</dbReference>
<dbReference type="InterPro" id="IPR018454">
    <property type="entry name" value="PTS_IIA_glucitol/sorbitol_sub"/>
</dbReference>
<dbReference type="NCBIfam" id="TIGR00849">
    <property type="entry name" value="gutA"/>
    <property type="match status" value="1"/>
</dbReference>
<dbReference type="NCBIfam" id="NF007696">
    <property type="entry name" value="PRK10377.1"/>
    <property type="match status" value="1"/>
</dbReference>
<dbReference type="PANTHER" id="PTHR40398">
    <property type="entry name" value="PTS SYSTEM GLUCITOL/SORBITOL-SPECIFIC EIIA COMPONENT"/>
    <property type="match status" value="1"/>
</dbReference>
<dbReference type="PANTHER" id="PTHR40398:SF1">
    <property type="entry name" value="PTS SYSTEM GLUCITOL_SORBITOL-SPECIFIC EIIA COMPONENT"/>
    <property type="match status" value="1"/>
</dbReference>
<dbReference type="Pfam" id="PF03829">
    <property type="entry name" value="PTSIIA_gutA"/>
    <property type="match status" value="1"/>
</dbReference>
<dbReference type="SUPFAM" id="SSF141530">
    <property type="entry name" value="PTSIIA/GutA-like"/>
    <property type="match status" value="1"/>
</dbReference>
<dbReference type="PROSITE" id="PS51097">
    <property type="entry name" value="PTS_EIIA_TYPE_5"/>
    <property type="match status" value="1"/>
</dbReference>
<protein>
    <recommendedName>
        <fullName evidence="1">PTS system glucitol/sorbitol-specific EIIA component</fullName>
    </recommendedName>
    <alternativeName>
        <fullName evidence="1">EIIA-Gut</fullName>
    </alternativeName>
    <alternativeName>
        <fullName evidence="1">EIII-Gut</fullName>
    </alternativeName>
    <alternativeName>
        <fullName evidence="1">Glucitol/sorbitol-specific phosphotransferase enzyme IIA component</fullName>
    </alternativeName>
</protein>
<gene>
    <name type="primary">srlB</name>
    <name type="ordered locus">SF2727</name>
    <name type="ordered locus">S2918</name>
</gene>